<dbReference type="EMBL" id="CP000025">
    <property type="protein sequence ID" value="AAW36249.1"/>
    <property type="molecule type" value="Genomic_DNA"/>
</dbReference>
<dbReference type="SMR" id="Q5HSD8"/>
<dbReference type="KEGG" id="cjr:CJE1827"/>
<dbReference type="HOGENOM" id="CLU_015803_1_0_7"/>
<dbReference type="GO" id="GO:0005886">
    <property type="term" value="C:plasma membrane"/>
    <property type="evidence" value="ECO:0007669"/>
    <property type="project" value="UniProtKB-SubCell"/>
</dbReference>
<dbReference type="GO" id="GO:0015385">
    <property type="term" value="F:sodium:proton antiporter activity"/>
    <property type="evidence" value="ECO:0007669"/>
    <property type="project" value="TreeGrafter"/>
</dbReference>
<dbReference type="GO" id="GO:0006885">
    <property type="term" value="P:regulation of pH"/>
    <property type="evidence" value="ECO:0007669"/>
    <property type="project" value="InterPro"/>
</dbReference>
<dbReference type="Gene3D" id="1.20.1530.10">
    <property type="entry name" value="Na+/H+ antiporter like domain"/>
    <property type="match status" value="1"/>
</dbReference>
<dbReference type="HAMAP" id="MF_01844">
    <property type="entry name" value="NhaA"/>
    <property type="match status" value="1"/>
</dbReference>
<dbReference type="InterPro" id="IPR023171">
    <property type="entry name" value="Na/H_antiporter_dom_sf"/>
</dbReference>
<dbReference type="InterPro" id="IPR004670">
    <property type="entry name" value="NhaA"/>
</dbReference>
<dbReference type="NCBIfam" id="TIGR00773">
    <property type="entry name" value="NhaA"/>
    <property type="match status" value="1"/>
</dbReference>
<dbReference type="NCBIfam" id="NF007111">
    <property type="entry name" value="PRK09560.1"/>
    <property type="match status" value="1"/>
</dbReference>
<dbReference type="NCBIfam" id="NF007112">
    <property type="entry name" value="PRK09561.1"/>
    <property type="match status" value="1"/>
</dbReference>
<dbReference type="PANTHER" id="PTHR30341:SF0">
    <property type="entry name" value="NA(+)_H(+) ANTIPORTER NHAA"/>
    <property type="match status" value="1"/>
</dbReference>
<dbReference type="PANTHER" id="PTHR30341">
    <property type="entry name" value="SODIUM ION/PROTON ANTIPORTER NHAA-RELATED"/>
    <property type="match status" value="1"/>
</dbReference>
<dbReference type="Pfam" id="PF06965">
    <property type="entry name" value="Na_H_antiport_1"/>
    <property type="match status" value="1"/>
</dbReference>
<sequence length="382" mass="42389">MQMIKKMVLSETFPGILLIFFTFLALLCKNSSLSVIYTDFFHANFTVGFDHFQISKSLDLWINDGLIAIFFLCIGLELKYEILRGQLKNIRAVSLPIFGALGGMITPALIFIAINYAHDFAMKGWAIPTATDIAFAVGILMLLGNKIPTSLKLFLLSLAIFDDLGAIVIIALFYTDQLSALAIIICLFCIFALLLLNYYHITHLSLYVLVGVVLWIAMLKSGVHATLAGVIISLFIPLDTKNKKPYLHEVLKDLNPWVVYFILPLFAFANAGIDIRDMHLGSVFSPVSLGIILGLFLGKQLGVFTFCFIAIKLKLAKLPENIKYGKFYGICILTGIGFTMSLFIDGLAYKNSDIFEYADKLAILVASFLSAIVGFIYLKIVK</sequence>
<reference key="1">
    <citation type="journal article" date="2005" name="PLoS Biol.">
        <title>Major structural differences and novel potential virulence mechanisms from the genomes of multiple Campylobacter species.</title>
        <authorList>
            <person name="Fouts D.E."/>
            <person name="Mongodin E.F."/>
            <person name="Mandrell R.E."/>
            <person name="Miller W.G."/>
            <person name="Rasko D.A."/>
            <person name="Ravel J."/>
            <person name="Brinkac L.M."/>
            <person name="DeBoy R.T."/>
            <person name="Parker C.T."/>
            <person name="Daugherty S.C."/>
            <person name="Dodson R.J."/>
            <person name="Durkin A.S."/>
            <person name="Madupu R."/>
            <person name="Sullivan S.A."/>
            <person name="Shetty J.U."/>
            <person name="Ayodeji M.A."/>
            <person name="Shvartsbeyn A."/>
            <person name="Schatz M.C."/>
            <person name="Badger J.H."/>
            <person name="Fraser C.M."/>
            <person name="Nelson K.E."/>
        </authorList>
    </citation>
    <scope>NUCLEOTIDE SEQUENCE [LARGE SCALE GENOMIC DNA]</scope>
    <source>
        <strain>RM1221</strain>
    </source>
</reference>
<name>NHAA2_CAMJR</name>
<keyword id="KW-0050">Antiport</keyword>
<keyword id="KW-0997">Cell inner membrane</keyword>
<keyword id="KW-1003">Cell membrane</keyword>
<keyword id="KW-0406">Ion transport</keyword>
<keyword id="KW-0472">Membrane</keyword>
<keyword id="KW-0915">Sodium</keyword>
<keyword id="KW-0739">Sodium transport</keyword>
<keyword id="KW-0812">Transmembrane</keyword>
<keyword id="KW-1133">Transmembrane helix</keyword>
<keyword id="KW-0813">Transport</keyword>
<organism>
    <name type="scientific">Campylobacter jejuni (strain RM1221)</name>
    <dbReference type="NCBI Taxonomy" id="195099"/>
    <lineage>
        <taxon>Bacteria</taxon>
        <taxon>Pseudomonadati</taxon>
        <taxon>Campylobacterota</taxon>
        <taxon>Epsilonproteobacteria</taxon>
        <taxon>Campylobacterales</taxon>
        <taxon>Campylobacteraceae</taxon>
        <taxon>Campylobacter</taxon>
    </lineage>
</organism>
<evidence type="ECO:0000255" key="1">
    <source>
        <dbReference type="HAMAP-Rule" id="MF_01844"/>
    </source>
</evidence>
<protein>
    <recommendedName>
        <fullName evidence="1">Na(+)/H(+) antiporter NhaA 2</fullName>
    </recommendedName>
    <alternativeName>
        <fullName evidence="1">Sodium/proton antiporter NhaA 2</fullName>
    </alternativeName>
</protein>
<proteinExistence type="inferred from homology"/>
<feature type="chain" id="PRO_0000334258" description="Na(+)/H(+) antiporter NhaA 2">
    <location>
        <begin position="1"/>
        <end position="382"/>
    </location>
</feature>
<feature type="transmembrane region" description="Helical" evidence="1">
    <location>
        <begin position="7"/>
        <end position="27"/>
    </location>
</feature>
<feature type="transmembrane region" description="Helical" evidence="1">
    <location>
        <begin position="58"/>
        <end position="78"/>
    </location>
</feature>
<feature type="transmembrane region" description="Helical" evidence="1">
    <location>
        <begin position="94"/>
        <end position="114"/>
    </location>
</feature>
<feature type="transmembrane region" description="Helical" evidence="1">
    <location>
        <begin position="124"/>
        <end position="144"/>
    </location>
</feature>
<feature type="transmembrane region" description="Helical" evidence="1">
    <location>
        <begin position="153"/>
        <end position="173"/>
    </location>
</feature>
<feature type="transmembrane region" description="Helical" evidence="1">
    <location>
        <begin position="178"/>
        <end position="198"/>
    </location>
</feature>
<feature type="transmembrane region" description="Helical" evidence="1">
    <location>
        <begin position="199"/>
        <end position="219"/>
    </location>
</feature>
<feature type="transmembrane region" description="Helical" evidence="1">
    <location>
        <begin position="255"/>
        <end position="275"/>
    </location>
</feature>
<feature type="transmembrane region" description="Helical" evidence="1">
    <location>
        <begin position="291"/>
        <end position="311"/>
    </location>
</feature>
<feature type="transmembrane region" description="Helical" evidence="1">
    <location>
        <begin position="327"/>
        <end position="347"/>
    </location>
</feature>
<feature type="transmembrane region" description="Helical" evidence="1">
    <location>
        <begin position="361"/>
        <end position="381"/>
    </location>
</feature>
<gene>
    <name evidence="1" type="primary">nhaA2</name>
    <name type="ordered locus">CJE1827</name>
</gene>
<accession>Q5HSD8</accession>
<comment type="function">
    <text evidence="1">Na(+)/H(+) antiporter that extrudes sodium in exchange for external protons.</text>
</comment>
<comment type="catalytic activity">
    <reaction evidence="1">
        <text>Na(+)(in) + 2 H(+)(out) = Na(+)(out) + 2 H(+)(in)</text>
        <dbReference type="Rhea" id="RHEA:29251"/>
        <dbReference type="ChEBI" id="CHEBI:15378"/>
        <dbReference type="ChEBI" id="CHEBI:29101"/>
    </reaction>
    <physiologicalReaction direction="left-to-right" evidence="1">
        <dbReference type="Rhea" id="RHEA:29252"/>
    </physiologicalReaction>
</comment>
<comment type="subcellular location">
    <subcellularLocation>
        <location evidence="1">Cell inner membrane</location>
        <topology evidence="1">Multi-pass membrane protein</topology>
    </subcellularLocation>
</comment>
<comment type="similarity">
    <text evidence="1">Belongs to the NhaA Na(+)/H(+) (TC 2.A.33) antiporter family.</text>
</comment>